<comment type="similarity">
    <text evidence="1">Belongs to the DNA glycosylase MPG family.</text>
</comment>
<accession>C4K2P9</accession>
<protein>
    <recommendedName>
        <fullName evidence="1">Putative 3-methyladenine DNA glycosylase</fullName>
        <ecNumber evidence="1">3.2.2.-</ecNumber>
    </recommendedName>
</protein>
<feature type="chain" id="PRO_1000211765" description="Putative 3-methyladenine DNA glycosylase">
    <location>
        <begin position="1"/>
        <end position="183"/>
    </location>
</feature>
<organism>
    <name type="scientific">Rickettsia peacockii (strain Rustic)</name>
    <dbReference type="NCBI Taxonomy" id="562019"/>
    <lineage>
        <taxon>Bacteria</taxon>
        <taxon>Pseudomonadati</taxon>
        <taxon>Pseudomonadota</taxon>
        <taxon>Alphaproteobacteria</taxon>
        <taxon>Rickettsiales</taxon>
        <taxon>Rickettsiaceae</taxon>
        <taxon>Rickettsieae</taxon>
        <taxon>Rickettsia</taxon>
        <taxon>spotted fever group</taxon>
    </lineage>
</organism>
<proteinExistence type="inferred from homology"/>
<dbReference type="EC" id="3.2.2.-" evidence="1"/>
<dbReference type="EMBL" id="CP001227">
    <property type="protein sequence ID" value="ACR47845.1"/>
    <property type="molecule type" value="Genomic_DNA"/>
</dbReference>
<dbReference type="RefSeq" id="WP_012737008.1">
    <property type="nucleotide sequence ID" value="NC_012730.1"/>
</dbReference>
<dbReference type="SMR" id="C4K2P9"/>
<dbReference type="KEGG" id="rpk:RPR_06885"/>
<dbReference type="HOGENOM" id="CLU_060471_4_1_5"/>
<dbReference type="Proteomes" id="UP000005015">
    <property type="component" value="Chromosome"/>
</dbReference>
<dbReference type="GO" id="GO:0003905">
    <property type="term" value="F:alkylbase DNA N-glycosylase activity"/>
    <property type="evidence" value="ECO:0007669"/>
    <property type="project" value="InterPro"/>
</dbReference>
<dbReference type="GO" id="GO:0003677">
    <property type="term" value="F:DNA binding"/>
    <property type="evidence" value="ECO:0007669"/>
    <property type="project" value="InterPro"/>
</dbReference>
<dbReference type="GO" id="GO:0006284">
    <property type="term" value="P:base-excision repair"/>
    <property type="evidence" value="ECO:0007669"/>
    <property type="project" value="InterPro"/>
</dbReference>
<dbReference type="CDD" id="cd00540">
    <property type="entry name" value="AAG"/>
    <property type="match status" value="1"/>
</dbReference>
<dbReference type="Gene3D" id="3.10.300.10">
    <property type="entry name" value="Methylpurine-DNA glycosylase (MPG)"/>
    <property type="match status" value="2"/>
</dbReference>
<dbReference type="HAMAP" id="MF_00527">
    <property type="entry name" value="3MGH"/>
    <property type="match status" value="1"/>
</dbReference>
<dbReference type="InterPro" id="IPR011034">
    <property type="entry name" value="Formyl_transferase-like_C_sf"/>
</dbReference>
<dbReference type="InterPro" id="IPR003180">
    <property type="entry name" value="MPG"/>
</dbReference>
<dbReference type="InterPro" id="IPR036995">
    <property type="entry name" value="MPG_sf"/>
</dbReference>
<dbReference type="NCBIfam" id="TIGR00567">
    <property type="entry name" value="3mg"/>
    <property type="match status" value="1"/>
</dbReference>
<dbReference type="NCBIfam" id="NF002004">
    <property type="entry name" value="PRK00802.1-4"/>
    <property type="match status" value="1"/>
</dbReference>
<dbReference type="PANTHER" id="PTHR10429">
    <property type="entry name" value="DNA-3-METHYLADENINE GLYCOSYLASE"/>
    <property type="match status" value="1"/>
</dbReference>
<dbReference type="PANTHER" id="PTHR10429:SF0">
    <property type="entry name" value="DNA-3-METHYLADENINE GLYCOSYLASE"/>
    <property type="match status" value="1"/>
</dbReference>
<dbReference type="Pfam" id="PF02245">
    <property type="entry name" value="Pur_DNA_glyco"/>
    <property type="match status" value="1"/>
</dbReference>
<dbReference type="SUPFAM" id="SSF50486">
    <property type="entry name" value="FMT C-terminal domain-like"/>
    <property type="match status" value="1"/>
</dbReference>
<keyword id="KW-0227">DNA damage</keyword>
<keyword id="KW-0234">DNA repair</keyword>
<keyword id="KW-0378">Hydrolase</keyword>
<name>3MGH_RICPU</name>
<reference key="1">
    <citation type="journal article" date="2009" name="PLoS ONE">
        <title>Genome sequence of the endosymbiont Rickettsia peacockii and comparison with virulent Rickettsia rickettsii: identification of virulence factors.</title>
        <authorList>
            <person name="Felsheim R.F."/>
            <person name="Kurtti T.J."/>
            <person name="Munderloh U.G."/>
        </authorList>
    </citation>
    <scope>NUCLEOTIDE SEQUENCE [LARGE SCALE GENOMIC DNA]</scope>
    <source>
        <strain>Rustic</strain>
    </source>
</reference>
<gene>
    <name type="ordered locus">RPR_06885</name>
</gene>
<sequence>MNKLIPLPREFFARDTNVVSTELIGKTLYFQGKTAIITETESYIGQNDPACHAARGRTKRTDIMFGPAGFSYVYLIYGMYYCLNFVTEAKGFPAATLIRGVHVISPENLYLNGPGKLCKYLGINISHNKCDLINNNAFFVGDIGLKLPYSTTARIGITKGTDKLWRYVVTDITNLISQYNVQP</sequence>
<evidence type="ECO:0000255" key="1">
    <source>
        <dbReference type="HAMAP-Rule" id="MF_00527"/>
    </source>
</evidence>